<sequence>GSIPFWIALIASFSVFLQGVKVKAPTFEITNKCPYTVWAAAFPGGGKQLAQGQSWSVQPDAGTSTGRIWGRTDCSFDGSGRGTCQSGDCNGTLNCQGDASAPVTLVEYTHNPSMNLDFYDISLLDGFNLPLSITPTSTNPNCKGIITCLSDINSQCPNELKVSGGCLSACVKYNTDDHCCRGANCNQTLYSRFFKEQCPQAYSYAKDDVTSAFTCPSGTDYKIVFCGKSDHIFALYLYITINNEE</sequence>
<reference key="1">
    <citation type="journal article" date="2006" name="Tree Physiol.">
        <title>Characterization of genes for novel thaumatin-like proteins in Cryptomeria japonica.</title>
        <authorList>
            <person name="Futamura N."/>
            <person name="Tani N."/>
            <person name="Tsumura Y."/>
            <person name="Nakajima N."/>
            <person name="Sakaguchi M."/>
            <person name="Shinohara K."/>
        </authorList>
    </citation>
    <scope>NUCLEOTIDE SEQUENCE [MRNA]</scope>
    <scope>TISSUE SPECIFICITY</scope>
    <scope>DEVELOPMENTAL STAGE</scope>
    <scope>INDUCTION BY ARACHIDONIC ACID</scope>
    <scope>GENE FAMILY</scope>
    <scope>NOMENCLATURE</scope>
    <source>
        <tissue>Pollen</tissue>
    </source>
</reference>
<reference key="2">
    <citation type="journal article" date="2007" name="Allergy">
        <title>Isolation and characterization of native Cry j 3 from Japanese cedar (Cryptomeria japonica) pollen.</title>
        <authorList>
            <person name="Fujimura T."/>
            <person name="Futamura N."/>
            <person name="Midoro-Horiuti T."/>
            <person name="Togawa A."/>
            <person name="Goldblum R.M."/>
            <person name="Yasueda H."/>
            <person name="Saito A."/>
            <person name="Shinohara K."/>
            <person name="Masuda K."/>
            <person name="Kurata K."/>
            <person name="Sakaguchi M."/>
        </authorList>
    </citation>
    <scope>ALLERGEN</scope>
    <source>
        <tissue>Flower</tissue>
    </source>
</reference>
<reference key="3">
    <citation type="journal article" date="2010" name="Plant Cell Rep.">
        <title>The superfamily of thaumatin-like proteins: its origin, evolution, and expression towards biological function.</title>
        <authorList>
            <person name="Liu J.-J."/>
            <person name="Sturrock R."/>
            <person name="Ekramoddoullah A.K.M."/>
        </authorList>
    </citation>
    <scope>REVIEW ON THAUMATIN-LIKE PROTEINS</scope>
</reference>
<reference key="4">
    <citation type="journal article" date="2012" name="Vet. Immunol. Immunopathol.">
        <title>IgE reactivity to a Cry j 3, an allergen of Japanese cedar (Cryptomeria japonica) pollen in dogs with canine atopic dermatitis.</title>
        <authorList>
            <person name="Kubota S."/>
            <person name="Miyaji K."/>
            <person name="Shimo Y."/>
            <person name="Shimakura H."/>
            <person name="Takase Y."/>
            <person name="Okamoto N."/>
            <person name="Kiuchi A."/>
            <person name="Fujimura M."/>
            <person name="Fujimura T."/>
            <person name="DeBoer D.J."/>
            <person name="Tsukui T."/>
            <person name="Sakaguchi M."/>
        </authorList>
    </citation>
    <scope>ALLERGEN</scope>
    <source>
        <tissue>Pollen</tissue>
    </source>
</reference>
<reference key="5">
    <citation type="journal article" date="2015" name="Allergol. Int.">
        <title>Spectrum of allergens for Japanese cedar pollinosis and impact of component-resolved diagnosis on allergen-specific immunotherapy.</title>
        <authorList>
            <person name="Fujimura T."/>
            <person name="Kawamoto S."/>
        </authorList>
    </citation>
    <scope>REVIEW ON ALLERGEN</scope>
</reference>
<keyword id="KW-0020">Allergen</keyword>
<keyword id="KW-1015">Disulfide bond</keyword>
<keyword id="KW-0325">Glycoprotein</keyword>
<keyword id="KW-0568">Pathogenesis-related protein</keyword>
<keyword id="KW-0611">Plant defense</keyword>
<keyword id="KW-0732">Signal</keyword>
<keyword id="KW-0346">Stress response</keyword>
<comment type="function">
    <text evidence="8">May be involved in disease resistance.</text>
</comment>
<comment type="tissue specificity">
    <text evidence="4">Mostly expressed in strobili, and, to a lower extent, in roots of seedlings and saplings.</text>
</comment>
<comment type="developmental stage">
    <text evidence="4">Mostly expressed in mature male strobili and present at high levels in mature and developing female strobili.</text>
</comment>
<comment type="induction">
    <text evidence="4">Strongly induced by arachidonic acid.</text>
</comment>
<comment type="allergen">
    <text evidence="5 6 9">Causes an oral allergy syndrome (OAS) reaction in human and animals (PubMed:17441795, PubMed:22749702, PubMed:26433527). Binds to IgE and induces the release of histamine from leukocytes of allergic patients (PubMed:17441795). Binds to IgE from canine atopic dermatitis (CAD) sensitive dogs (PubMed:22749702).</text>
</comment>
<comment type="similarity">
    <text evidence="3">Belongs to the thaumatin family.</text>
</comment>
<name>CRJ36_CRYJA</name>
<accession>Q5DWG0</accession>
<organism>
    <name type="scientific">Cryptomeria japonica</name>
    <name type="common">Japanese cedar</name>
    <name type="synonym">Cupressus japonica</name>
    <dbReference type="NCBI Taxonomy" id="3369"/>
    <lineage>
        <taxon>Eukaryota</taxon>
        <taxon>Viridiplantae</taxon>
        <taxon>Streptophyta</taxon>
        <taxon>Embryophyta</taxon>
        <taxon>Tracheophyta</taxon>
        <taxon>Spermatophyta</taxon>
        <taxon>Pinopsida</taxon>
        <taxon>Pinidae</taxon>
        <taxon>Conifers II</taxon>
        <taxon>Cupressales</taxon>
        <taxon>Cupressaceae</taxon>
        <taxon>Cryptomeria</taxon>
    </lineage>
</organism>
<feature type="signal peptide" evidence="1">
    <location>
        <begin position="1"/>
        <end position="19"/>
    </location>
</feature>
<feature type="chain" id="PRO_5004255693" description="Pathogenesis-related thaumatin-like protein 3.6">
    <location>
        <begin position="20"/>
        <end position="245"/>
    </location>
</feature>
<feature type="glycosylation site" description="N-linked (GlcNAc...) asparagine" evidence="2">
    <location>
        <position position="90"/>
    </location>
</feature>
<feature type="glycosylation site" description="N-linked (GlcNAc...) asparagine" evidence="2">
    <location>
        <position position="186"/>
    </location>
</feature>
<feature type="disulfide bond" evidence="3">
    <location>
        <begin position="33"/>
        <end position="226"/>
    </location>
</feature>
<feature type="disulfide bond" evidence="3">
    <location>
        <begin position="74"/>
        <end position="84"/>
    </location>
</feature>
<feature type="disulfide bond" evidence="3">
    <location>
        <begin position="89"/>
        <end position="95"/>
    </location>
</feature>
<feature type="disulfide bond" evidence="3">
    <location>
        <begin position="142"/>
        <end position="215"/>
    </location>
</feature>
<feature type="disulfide bond" evidence="3">
    <location>
        <begin position="148"/>
        <end position="198"/>
    </location>
</feature>
<feature type="disulfide bond" evidence="3">
    <location>
        <begin position="156"/>
        <end position="166"/>
    </location>
</feature>
<feature type="disulfide bond" evidence="3">
    <location>
        <begin position="170"/>
        <end position="179"/>
    </location>
</feature>
<feature type="disulfide bond" evidence="3">
    <location>
        <begin position="180"/>
        <end position="185"/>
    </location>
</feature>
<feature type="non-terminal residue" evidence="11">
    <location>
        <position position="1"/>
    </location>
</feature>
<protein>
    <recommendedName>
        <fullName evidence="10">Pathogenesis-related thaumatin-like protein 3.6</fullName>
    </recommendedName>
    <allergenName evidence="7">Cry j 3.6</allergenName>
</protein>
<evidence type="ECO:0000255" key="1"/>
<evidence type="ECO:0000255" key="2">
    <source>
        <dbReference type="PROSITE-ProRule" id="PRU00498"/>
    </source>
</evidence>
<evidence type="ECO:0000255" key="3">
    <source>
        <dbReference type="PROSITE-ProRule" id="PRU00699"/>
    </source>
</evidence>
<evidence type="ECO:0000269" key="4">
    <source>
    </source>
</evidence>
<evidence type="ECO:0000269" key="5">
    <source>
    </source>
</evidence>
<evidence type="ECO:0000269" key="6">
    <source>
    </source>
</evidence>
<evidence type="ECO:0000303" key="7">
    <source>
    </source>
</evidence>
<evidence type="ECO:0000303" key="8">
    <source>
    </source>
</evidence>
<evidence type="ECO:0000303" key="9">
    <source>
    </source>
</evidence>
<evidence type="ECO:0000305" key="10"/>
<evidence type="ECO:0000312" key="11">
    <source>
        <dbReference type="EMBL" id="BAD90815.1"/>
    </source>
</evidence>
<dbReference type="EMBL" id="AB186386">
    <property type="protein sequence ID" value="BAD90815.1"/>
    <property type="molecule type" value="mRNA"/>
</dbReference>
<dbReference type="SMR" id="Q5DWG0"/>
<dbReference type="Allergome" id="805">
    <property type="allergen name" value="Cry j 3"/>
</dbReference>
<dbReference type="GO" id="GO:0006952">
    <property type="term" value="P:defense response"/>
    <property type="evidence" value="ECO:0007669"/>
    <property type="project" value="UniProtKB-KW"/>
</dbReference>
<dbReference type="GO" id="GO:1904550">
    <property type="term" value="P:response to arachidonate"/>
    <property type="evidence" value="ECO:0000270"/>
    <property type="project" value="UniProtKB"/>
</dbReference>
<dbReference type="FunFam" id="2.60.110.10:FF:000003">
    <property type="entry name" value="Thaumatin I"/>
    <property type="match status" value="1"/>
</dbReference>
<dbReference type="Gene3D" id="2.60.110.10">
    <property type="entry name" value="Thaumatin"/>
    <property type="match status" value="1"/>
</dbReference>
<dbReference type="InterPro" id="IPR037176">
    <property type="entry name" value="Osmotin/thaumatin-like_sf"/>
</dbReference>
<dbReference type="InterPro" id="IPR001938">
    <property type="entry name" value="Thaumatin"/>
</dbReference>
<dbReference type="PANTHER" id="PTHR31048">
    <property type="entry name" value="OS03G0233200 PROTEIN"/>
    <property type="match status" value="1"/>
</dbReference>
<dbReference type="Pfam" id="PF00314">
    <property type="entry name" value="Thaumatin"/>
    <property type="match status" value="1"/>
</dbReference>
<dbReference type="PIRSF" id="PIRSF002703">
    <property type="entry name" value="Thaumatin"/>
    <property type="match status" value="1"/>
</dbReference>
<dbReference type="PRINTS" id="PR00347">
    <property type="entry name" value="THAUMATIN"/>
</dbReference>
<dbReference type="SMART" id="SM00205">
    <property type="entry name" value="THN"/>
    <property type="match status" value="1"/>
</dbReference>
<dbReference type="SUPFAM" id="SSF49870">
    <property type="entry name" value="Osmotin, thaumatin-like protein"/>
    <property type="match status" value="1"/>
</dbReference>
<dbReference type="PROSITE" id="PS51367">
    <property type="entry name" value="THAUMATIN_2"/>
    <property type="match status" value="1"/>
</dbReference>
<proteinExistence type="evidence at protein level"/>